<dbReference type="EMBL" id="CP001402">
    <property type="protein sequence ID" value="ACR42007.1"/>
    <property type="molecule type" value="Genomic_DNA"/>
</dbReference>
<dbReference type="RefSeq" id="WP_012713728.1">
    <property type="nucleotide sequence ID" value="NC_012726.1"/>
</dbReference>
<dbReference type="SMR" id="C4KHE3"/>
<dbReference type="GeneID" id="84061727"/>
<dbReference type="KEGG" id="sid:M164_1401"/>
<dbReference type="HOGENOM" id="CLU_038194_0_0_2"/>
<dbReference type="Proteomes" id="UP000001479">
    <property type="component" value="Chromosome"/>
</dbReference>
<dbReference type="GO" id="GO:0000177">
    <property type="term" value="C:cytoplasmic exosome (RNase complex)"/>
    <property type="evidence" value="ECO:0007669"/>
    <property type="project" value="TreeGrafter"/>
</dbReference>
<dbReference type="GO" id="GO:0035925">
    <property type="term" value="F:mRNA 3'-UTR AU-rich region binding"/>
    <property type="evidence" value="ECO:0007669"/>
    <property type="project" value="TreeGrafter"/>
</dbReference>
<dbReference type="GO" id="GO:0016075">
    <property type="term" value="P:rRNA catabolic process"/>
    <property type="evidence" value="ECO:0007669"/>
    <property type="project" value="TreeGrafter"/>
</dbReference>
<dbReference type="CDD" id="cd11365">
    <property type="entry name" value="RNase_PH_archRRP42"/>
    <property type="match status" value="1"/>
</dbReference>
<dbReference type="FunFam" id="3.30.230.70:FF:000017">
    <property type="entry name" value="Exosome complex component Rrp42"/>
    <property type="match status" value="1"/>
</dbReference>
<dbReference type="Gene3D" id="3.30.230.70">
    <property type="entry name" value="GHMP Kinase, N-terminal domain"/>
    <property type="match status" value="1"/>
</dbReference>
<dbReference type="HAMAP" id="MF_00622">
    <property type="entry name" value="Exosome_Rrp42"/>
    <property type="match status" value="1"/>
</dbReference>
<dbReference type="InterPro" id="IPR001247">
    <property type="entry name" value="ExoRNase_PH_dom1"/>
</dbReference>
<dbReference type="InterPro" id="IPR015847">
    <property type="entry name" value="ExoRNase_PH_dom2"/>
</dbReference>
<dbReference type="InterPro" id="IPR036345">
    <property type="entry name" value="ExoRNase_PH_dom2_sf"/>
</dbReference>
<dbReference type="InterPro" id="IPR050590">
    <property type="entry name" value="Exosome_comp_Rrp42_subfam"/>
</dbReference>
<dbReference type="InterPro" id="IPR027408">
    <property type="entry name" value="PNPase/RNase_PH_dom_sf"/>
</dbReference>
<dbReference type="InterPro" id="IPR020568">
    <property type="entry name" value="Ribosomal_Su5_D2-typ_SF"/>
</dbReference>
<dbReference type="InterPro" id="IPR020869">
    <property type="entry name" value="Rrp42_archaea"/>
</dbReference>
<dbReference type="NCBIfam" id="NF003282">
    <property type="entry name" value="PRK04282.1-1"/>
    <property type="match status" value="1"/>
</dbReference>
<dbReference type="PANTHER" id="PTHR11097:SF8">
    <property type="entry name" value="EXOSOME COMPLEX COMPONENT RRP42"/>
    <property type="match status" value="1"/>
</dbReference>
<dbReference type="PANTHER" id="PTHR11097">
    <property type="entry name" value="EXOSOME COMPLEX EXONUCLEASE RIBOSOMAL RNA PROCESSING PROTEIN"/>
    <property type="match status" value="1"/>
</dbReference>
<dbReference type="Pfam" id="PF01138">
    <property type="entry name" value="RNase_PH"/>
    <property type="match status" value="1"/>
</dbReference>
<dbReference type="Pfam" id="PF03725">
    <property type="entry name" value="RNase_PH_C"/>
    <property type="match status" value="1"/>
</dbReference>
<dbReference type="SUPFAM" id="SSF55666">
    <property type="entry name" value="Ribonuclease PH domain 2-like"/>
    <property type="match status" value="1"/>
</dbReference>
<dbReference type="SUPFAM" id="SSF54211">
    <property type="entry name" value="Ribosomal protein S5 domain 2-like"/>
    <property type="match status" value="1"/>
</dbReference>
<sequence length="275" mass="30282">MSSTPSNQNIIPLIKKESIVSLFEKGTRQDGRKLTDYRPLSITLDYAKKADGSALVKLGTTMVLAGTKLEIDKPYEDTPNQGNLIVNVELLPLAYETFEPGPPDENAIELARVVDRSLRDSKALDLTKLVIEPGKSVWTVWLDVYVLDYGGNVLDACTLASVAALYNTKVYKVEQDSNGFRVNKNEVVGKLPLNHPVVTVSIAKVDKYLIVDPDLDEESIMDTKVSFSYTPDLKIVGIQKSGKGSMSLQDIDQAENTARLVAVKLLEELKKQLGI</sequence>
<organism>
    <name type="scientific">Saccharolobus islandicus (strain M.16.4 / Kamchatka #3)</name>
    <name type="common">Sulfolobus islandicus</name>
    <dbReference type="NCBI Taxonomy" id="426118"/>
    <lineage>
        <taxon>Archaea</taxon>
        <taxon>Thermoproteota</taxon>
        <taxon>Thermoprotei</taxon>
        <taxon>Sulfolobales</taxon>
        <taxon>Sulfolobaceae</taxon>
        <taxon>Saccharolobus</taxon>
    </lineage>
</organism>
<gene>
    <name evidence="1" type="primary">rrp42</name>
    <name type="ordered locus">M164_1401</name>
</gene>
<comment type="function">
    <text evidence="1">Non-catalytic component of the exosome, which is a complex involved in RNA degradation. Contributes to the structuring of the Rrp41 active site.</text>
</comment>
<comment type="subunit">
    <text evidence="1">Component of the archaeal exosome complex. Forms a hexameric ring-like arrangement composed of 3 Rrp41-Rrp42 heterodimers. The hexameric ring associates with a trimer of Rrp4 and/or Csl4 subunits.</text>
</comment>
<comment type="subcellular location">
    <subcellularLocation>
        <location evidence="1">Cytoplasm</location>
    </subcellularLocation>
</comment>
<comment type="similarity">
    <text evidence="1">Belongs to the RNase PH family. Rrp42 subfamily.</text>
</comment>
<evidence type="ECO:0000255" key="1">
    <source>
        <dbReference type="HAMAP-Rule" id="MF_00622"/>
    </source>
</evidence>
<accession>C4KHE3</accession>
<protein>
    <recommendedName>
        <fullName evidence="1">Exosome complex component Rrp42</fullName>
    </recommendedName>
</protein>
<keyword id="KW-0963">Cytoplasm</keyword>
<keyword id="KW-0271">Exosome</keyword>
<proteinExistence type="inferred from homology"/>
<reference key="1">
    <citation type="journal article" date="2009" name="Proc. Natl. Acad. Sci. U.S.A.">
        <title>Biogeography of the Sulfolobus islandicus pan-genome.</title>
        <authorList>
            <person name="Reno M.L."/>
            <person name="Held N.L."/>
            <person name="Fields C.J."/>
            <person name="Burke P.V."/>
            <person name="Whitaker R.J."/>
        </authorList>
    </citation>
    <scope>NUCLEOTIDE SEQUENCE [LARGE SCALE GENOMIC DNA]</scope>
    <source>
        <strain>M.16.4 / Kamchatka #3</strain>
    </source>
</reference>
<feature type="chain" id="PRO_1000212290" description="Exosome complex component Rrp42">
    <location>
        <begin position="1"/>
        <end position="275"/>
    </location>
</feature>
<name>RRP42_SACI6</name>